<comment type="function">
    <text evidence="3">Scaffold protein required to form the phloem filament matrix in sieve elements.</text>
</comment>
<comment type="subunit">
    <text evidence="3">Can form homodimer.</text>
</comment>
<comment type="tissue specificity">
    <text evidence="2">Expressed in phloem sieve elements.</text>
</comment>
<comment type="disruption phenotype">
    <text evidence="3">No visible phenotype under normal growth conditions.</text>
</comment>
<dbReference type="EMBL" id="HM162886">
    <property type="protein sequence ID" value="ADN32814.1"/>
    <property type="molecule type" value="mRNA"/>
</dbReference>
<dbReference type="EMBL" id="AC009325">
    <property type="protein sequence ID" value="AAF01551.1"/>
    <property type="molecule type" value="Genomic_DNA"/>
</dbReference>
<dbReference type="EMBL" id="CP002686">
    <property type="protein sequence ID" value="AEE73702.1"/>
    <property type="molecule type" value="Genomic_DNA"/>
</dbReference>
<dbReference type="EMBL" id="BT008325">
    <property type="protein sequence ID" value="AAP37684.1"/>
    <property type="molecule type" value="mRNA"/>
</dbReference>
<dbReference type="EMBL" id="AK228096">
    <property type="protein sequence ID" value="BAF00055.1"/>
    <property type="molecule type" value="mRNA"/>
</dbReference>
<dbReference type="RefSeq" id="NP_186817.1">
    <property type="nucleotide sequence ID" value="NM_111034.3"/>
</dbReference>
<dbReference type="FunCoup" id="Q9SS87">
    <property type="interactions" value="305"/>
</dbReference>
<dbReference type="STRING" id="3702.Q9SS87"/>
<dbReference type="iPTMnet" id="Q9SS87"/>
<dbReference type="PaxDb" id="3702-AT3G01680.1"/>
<dbReference type="ProteomicsDB" id="232673"/>
<dbReference type="EnsemblPlants" id="AT3G01680.1">
    <property type="protein sequence ID" value="AT3G01680.1"/>
    <property type="gene ID" value="AT3G01680"/>
</dbReference>
<dbReference type="GeneID" id="821097"/>
<dbReference type="Gramene" id="AT3G01680.1">
    <property type="protein sequence ID" value="AT3G01680.1"/>
    <property type="gene ID" value="AT3G01680"/>
</dbReference>
<dbReference type="KEGG" id="ath:AT3G01680"/>
<dbReference type="Araport" id="AT3G01680"/>
<dbReference type="TAIR" id="AT3G01680">
    <property type="gene designation" value="SEOR1"/>
</dbReference>
<dbReference type="eggNOG" id="ENOG502QRW8">
    <property type="taxonomic scope" value="Eukaryota"/>
</dbReference>
<dbReference type="HOGENOM" id="CLU_025476_0_0_1"/>
<dbReference type="InParanoid" id="Q9SS87"/>
<dbReference type="OMA" id="PHTDNMK"/>
<dbReference type="OrthoDB" id="1895250at2759"/>
<dbReference type="PhylomeDB" id="Q9SS87"/>
<dbReference type="PRO" id="PR:Q9SS87"/>
<dbReference type="Proteomes" id="UP000006548">
    <property type="component" value="Chromosome 3"/>
</dbReference>
<dbReference type="ExpressionAtlas" id="Q9SS87">
    <property type="expression patterns" value="baseline and differential"/>
</dbReference>
<dbReference type="GO" id="GO:0042803">
    <property type="term" value="F:protein homodimerization activity"/>
    <property type="evidence" value="ECO:0000353"/>
    <property type="project" value="UniProtKB"/>
</dbReference>
<dbReference type="GO" id="GO:0010088">
    <property type="term" value="P:phloem development"/>
    <property type="evidence" value="ECO:0000315"/>
    <property type="project" value="UniProtKB"/>
</dbReference>
<dbReference type="InterPro" id="IPR027944">
    <property type="entry name" value="SEO_C"/>
</dbReference>
<dbReference type="InterPro" id="IPR027942">
    <property type="entry name" value="SEO_N"/>
</dbReference>
<dbReference type="InterPro" id="IPR039299">
    <property type="entry name" value="SEOA"/>
</dbReference>
<dbReference type="PANTHER" id="PTHR33232:SF9">
    <property type="entry name" value="PROTEIN SIEVE ELEMENT OCCLUSION B"/>
    <property type="match status" value="1"/>
</dbReference>
<dbReference type="PANTHER" id="PTHR33232">
    <property type="entry name" value="PROTEIN SIEVE ELEMENT OCCLUSION B-LIKE"/>
    <property type="match status" value="1"/>
</dbReference>
<dbReference type="Pfam" id="PF14577">
    <property type="entry name" value="SEO_C"/>
    <property type="match status" value="1"/>
</dbReference>
<dbReference type="Pfam" id="PF14576">
    <property type="entry name" value="SEO_N"/>
    <property type="match status" value="1"/>
</dbReference>
<keyword id="KW-1185">Reference proteome</keyword>
<protein>
    <recommendedName>
        <fullName evidence="4">Protein SIEVE ELEMENT OCCLUSION B</fullName>
        <shortName evidence="4">AtSEOb</shortName>
    </recommendedName>
    <alternativeName>
        <fullName evidence="5">Protein SIEVE ELEMENT OCCLUSION-RELATED 1</fullName>
        <shortName evidence="5">AtSEOR1</shortName>
    </alternativeName>
</protein>
<proteinExistence type="evidence at protein level"/>
<gene>
    <name evidence="4" type="primary">SEOB</name>
    <name evidence="5" type="synonym">SEOR1</name>
    <name evidence="6" type="ordered locus">At3g01680</name>
    <name evidence="7" type="ORF">F4P13.22</name>
</gene>
<name>SEOB_ARATH</name>
<evidence type="ECO:0000256" key="1">
    <source>
        <dbReference type="SAM" id="MobiDB-lite"/>
    </source>
</evidence>
<evidence type="ECO:0000269" key="2">
    <source>
    </source>
</evidence>
<evidence type="ECO:0000269" key="3">
    <source>
    </source>
</evidence>
<evidence type="ECO:0000303" key="4">
    <source>
    </source>
</evidence>
<evidence type="ECO:0000303" key="5">
    <source>
    </source>
</evidence>
<evidence type="ECO:0000312" key="6">
    <source>
        <dbReference type="Araport" id="AT3G01680"/>
    </source>
</evidence>
<evidence type="ECO:0000312" key="7">
    <source>
        <dbReference type="EMBL" id="AAF01551.1"/>
    </source>
</evidence>
<reference key="1">
    <citation type="journal article" date="2010" name="BMC Plant Biol.">
        <title>Molecular and phylogenetic characterization of the sieve element occlusion gene family in Fabaceae and non-Fabaceae plants.</title>
        <authorList>
            <person name="Ruping B."/>
            <person name="Ernst A.M."/>
            <person name="Jekat S.B."/>
            <person name="Nordzieke S."/>
            <person name="Reineke A.R."/>
            <person name="Muller B."/>
            <person name="Bornberg-Bauer E."/>
            <person name="Prufer D."/>
            <person name="Noll G.A."/>
        </authorList>
    </citation>
    <scope>NUCLEOTIDE SEQUENCE [MRNA]</scope>
    <scope>GENE FAMILY</scope>
    <scope>NOMENCLATURE</scope>
</reference>
<reference key="2">
    <citation type="journal article" date="2000" name="Nature">
        <title>Sequence and analysis of chromosome 3 of the plant Arabidopsis thaliana.</title>
        <authorList>
            <person name="Salanoubat M."/>
            <person name="Lemcke K."/>
            <person name="Rieger M."/>
            <person name="Ansorge W."/>
            <person name="Unseld M."/>
            <person name="Fartmann B."/>
            <person name="Valle G."/>
            <person name="Bloecker H."/>
            <person name="Perez-Alonso M."/>
            <person name="Obermaier B."/>
            <person name="Delseny M."/>
            <person name="Boutry M."/>
            <person name="Grivell L.A."/>
            <person name="Mache R."/>
            <person name="Puigdomenech P."/>
            <person name="De Simone V."/>
            <person name="Choisne N."/>
            <person name="Artiguenave F."/>
            <person name="Robert C."/>
            <person name="Brottier P."/>
            <person name="Wincker P."/>
            <person name="Cattolico L."/>
            <person name="Weissenbach J."/>
            <person name="Saurin W."/>
            <person name="Quetier F."/>
            <person name="Schaefer M."/>
            <person name="Mueller-Auer S."/>
            <person name="Gabel C."/>
            <person name="Fuchs M."/>
            <person name="Benes V."/>
            <person name="Wurmbach E."/>
            <person name="Drzonek H."/>
            <person name="Erfle H."/>
            <person name="Jordan N."/>
            <person name="Bangert S."/>
            <person name="Wiedelmann R."/>
            <person name="Kranz H."/>
            <person name="Voss H."/>
            <person name="Holland R."/>
            <person name="Brandt P."/>
            <person name="Nyakatura G."/>
            <person name="Vezzi A."/>
            <person name="D'Angelo M."/>
            <person name="Pallavicini A."/>
            <person name="Toppo S."/>
            <person name="Simionati B."/>
            <person name="Conrad A."/>
            <person name="Hornischer K."/>
            <person name="Kauer G."/>
            <person name="Loehnert T.-H."/>
            <person name="Nordsiek G."/>
            <person name="Reichelt J."/>
            <person name="Scharfe M."/>
            <person name="Schoen O."/>
            <person name="Bargues M."/>
            <person name="Terol J."/>
            <person name="Climent J."/>
            <person name="Navarro P."/>
            <person name="Collado C."/>
            <person name="Perez-Perez A."/>
            <person name="Ottenwaelder B."/>
            <person name="Duchemin D."/>
            <person name="Cooke R."/>
            <person name="Laudie M."/>
            <person name="Berger-Llauro C."/>
            <person name="Purnelle B."/>
            <person name="Masuy D."/>
            <person name="de Haan M."/>
            <person name="Maarse A.C."/>
            <person name="Alcaraz J.-P."/>
            <person name="Cottet A."/>
            <person name="Casacuberta E."/>
            <person name="Monfort A."/>
            <person name="Argiriou A."/>
            <person name="Flores M."/>
            <person name="Liguori R."/>
            <person name="Vitale D."/>
            <person name="Mannhaupt G."/>
            <person name="Haase D."/>
            <person name="Schoof H."/>
            <person name="Rudd S."/>
            <person name="Zaccaria P."/>
            <person name="Mewes H.-W."/>
            <person name="Mayer K.F.X."/>
            <person name="Kaul S."/>
            <person name="Town C.D."/>
            <person name="Koo H.L."/>
            <person name="Tallon L.J."/>
            <person name="Jenkins J."/>
            <person name="Rooney T."/>
            <person name="Rizzo M."/>
            <person name="Walts A."/>
            <person name="Utterback T."/>
            <person name="Fujii C.Y."/>
            <person name="Shea T.P."/>
            <person name="Creasy T.H."/>
            <person name="Haas B."/>
            <person name="Maiti R."/>
            <person name="Wu D."/>
            <person name="Peterson J."/>
            <person name="Van Aken S."/>
            <person name="Pai G."/>
            <person name="Militscher J."/>
            <person name="Sellers P."/>
            <person name="Gill J.E."/>
            <person name="Feldblyum T.V."/>
            <person name="Preuss D."/>
            <person name="Lin X."/>
            <person name="Nierman W.C."/>
            <person name="Salzberg S.L."/>
            <person name="White O."/>
            <person name="Venter J.C."/>
            <person name="Fraser C.M."/>
            <person name="Kaneko T."/>
            <person name="Nakamura Y."/>
            <person name="Sato S."/>
            <person name="Kato T."/>
            <person name="Asamizu E."/>
            <person name="Sasamoto S."/>
            <person name="Kimura T."/>
            <person name="Idesawa K."/>
            <person name="Kawashima K."/>
            <person name="Kishida Y."/>
            <person name="Kiyokawa C."/>
            <person name="Kohara M."/>
            <person name="Matsumoto M."/>
            <person name="Matsuno A."/>
            <person name="Muraki A."/>
            <person name="Nakayama S."/>
            <person name="Nakazaki N."/>
            <person name="Shinpo S."/>
            <person name="Takeuchi C."/>
            <person name="Wada T."/>
            <person name="Watanabe A."/>
            <person name="Yamada M."/>
            <person name="Yasuda M."/>
            <person name="Tabata S."/>
        </authorList>
    </citation>
    <scope>NUCLEOTIDE SEQUENCE [LARGE SCALE GENOMIC DNA]</scope>
    <source>
        <strain>cv. Columbia</strain>
    </source>
</reference>
<reference key="3">
    <citation type="journal article" date="2017" name="Plant J.">
        <title>Araport11: a complete reannotation of the Arabidopsis thaliana reference genome.</title>
        <authorList>
            <person name="Cheng C.Y."/>
            <person name="Krishnakumar V."/>
            <person name="Chan A.P."/>
            <person name="Thibaud-Nissen F."/>
            <person name="Schobel S."/>
            <person name="Town C.D."/>
        </authorList>
    </citation>
    <scope>GENOME REANNOTATION</scope>
    <source>
        <strain>cv. Columbia</strain>
    </source>
</reference>
<reference key="4">
    <citation type="journal article" date="2003" name="Science">
        <title>Empirical analysis of transcriptional activity in the Arabidopsis genome.</title>
        <authorList>
            <person name="Yamada K."/>
            <person name="Lim J."/>
            <person name="Dale J.M."/>
            <person name="Chen H."/>
            <person name="Shinn P."/>
            <person name="Palm C.J."/>
            <person name="Southwick A.M."/>
            <person name="Wu H.C."/>
            <person name="Kim C.J."/>
            <person name="Nguyen M."/>
            <person name="Pham P.K."/>
            <person name="Cheuk R.F."/>
            <person name="Karlin-Newmann G."/>
            <person name="Liu S.X."/>
            <person name="Lam B."/>
            <person name="Sakano H."/>
            <person name="Wu T."/>
            <person name="Yu G."/>
            <person name="Miranda M."/>
            <person name="Quach H.L."/>
            <person name="Tripp M."/>
            <person name="Chang C.H."/>
            <person name="Lee J.M."/>
            <person name="Toriumi M.J."/>
            <person name="Chan M.M."/>
            <person name="Tang C.C."/>
            <person name="Onodera C.S."/>
            <person name="Deng J.M."/>
            <person name="Akiyama K."/>
            <person name="Ansari Y."/>
            <person name="Arakawa T."/>
            <person name="Banh J."/>
            <person name="Banno F."/>
            <person name="Bowser L."/>
            <person name="Brooks S.Y."/>
            <person name="Carninci P."/>
            <person name="Chao Q."/>
            <person name="Choy N."/>
            <person name="Enju A."/>
            <person name="Goldsmith A.D."/>
            <person name="Gurjal M."/>
            <person name="Hansen N.F."/>
            <person name="Hayashizaki Y."/>
            <person name="Johnson-Hopson C."/>
            <person name="Hsuan V.W."/>
            <person name="Iida K."/>
            <person name="Karnes M."/>
            <person name="Khan S."/>
            <person name="Koesema E."/>
            <person name="Ishida J."/>
            <person name="Jiang P.X."/>
            <person name="Jones T."/>
            <person name="Kawai J."/>
            <person name="Kamiya A."/>
            <person name="Meyers C."/>
            <person name="Nakajima M."/>
            <person name="Narusaka M."/>
            <person name="Seki M."/>
            <person name="Sakurai T."/>
            <person name="Satou M."/>
            <person name="Tamse R."/>
            <person name="Vaysberg M."/>
            <person name="Wallender E.K."/>
            <person name="Wong C."/>
            <person name="Yamamura Y."/>
            <person name="Yuan S."/>
            <person name="Shinozaki K."/>
            <person name="Davis R.W."/>
            <person name="Theologis A."/>
            <person name="Ecker J.R."/>
        </authorList>
    </citation>
    <scope>NUCLEOTIDE SEQUENCE [LARGE SCALE MRNA]</scope>
    <source>
        <strain>cv. Columbia</strain>
    </source>
</reference>
<reference key="5">
    <citation type="submission" date="2006-07" db="EMBL/GenBank/DDBJ databases">
        <title>Large-scale analysis of RIKEN Arabidopsis full-length (RAFL) cDNAs.</title>
        <authorList>
            <person name="Totoki Y."/>
            <person name="Seki M."/>
            <person name="Ishida J."/>
            <person name="Nakajima M."/>
            <person name="Enju A."/>
            <person name="Kamiya A."/>
            <person name="Narusaka M."/>
            <person name="Shin-i T."/>
            <person name="Nakagawa M."/>
            <person name="Sakamoto N."/>
            <person name="Oishi K."/>
            <person name="Kohara Y."/>
            <person name="Kobayashi M."/>
            <person name="Toyoda A."/>
            <person name="Sakaki Y."/>
            <person name="Sakurai T."/>
            <person name="Iida K."/>
            <person name="Akiyama K."/>
            <person name="Satou M."/>
            <person name="Toyoda T."/>
            <person name="Konagaya A."/>
            <person name="Carninci P."/>
            <person name="Kawai J."/>
            <person name="Hayashizaki Y."/>
            <person name="Shinozaki K."/>
        </authorList>
    </citation>
    <scope>NUCLEOTIDE SEQUENCE [LARGE SCALE MRNA]</scope>
    <source>
        <strain>cv. Columbia</strain>
    </source>
</reference>
<reference key="6">
    <citation type="journal article" date="2011" name="Plant Cell">
        <title>Phloem ultrastructure and pressure flow: Sieve-Element-Occlusion-Related agglomerations do not affect translocation.</title>
        <authorList>
            <person name="Froelich D.R."/>
            <person name="Mullendore D.L."/>
            <person name="Jensen K.H."/>
            <person name="Ross-Elliott T.J."/>
            <person name="Anstead J.A."/>
            <person name="Thompson G.A."/>
            <person name="Pelissier H.C."/>
            <person name="Knoblauch M."/>
        </authorList>
    </citation>
    <scope>TISSUE SPECIFICITY</scope>
</reference>
<reference key="7">
    <citation type="journal article" date="2012" name="Plant Cell Physiol.">
        <title>Arabidopsis P-protein filament formation requires both AtSEOR1 and AtSEOR2.</title>
        <authorList>
            <person name="Anstead J.A."/>
            <person name="Froelich D.R."/>
            <person name="Knoblauch M."/>
            <person name="Thompson G.A."/>
        </authorList>
    </citation>
    <scope>IDENTIFICATION BY MASS SPECTROMETRY</scope>
    <scope>FUNCTION</scope>
    <scope>SUBUNIT</scope>
    <scope>DISRUPTION PHENOTYPE</scope>
</reference>
<accession>Q9SS87</accession>
<organism>
    <name type="scientific">Arabidopsis thaliana</name>
    <name type="common">Mouse-ear cress</name>
    <dbReference type="NCBI Taxonomy" id="3702"/>
    <lineage>
        <taxon>Eukaryota</taxon>
        <taxon>Viridiplantae</taxon>
        <taxon>Streptophyta</taxon>
        <taxon>Embryophyta</taxon>
        <taxon>Tracheophyta</taxon>
        <taxon>Spermatophyta</taxon>
        <taxon>Magnoliopsida</taxon>
        <taxon>eudicotyledons</taxon>
        <taxon>Gunneridae</taxon>
        <taxon>Pentapetalae</taxon>
        <taxon>rosids</taxon>
        <taxon>malvids</taxon>
        <taxon>Brassicales</taxon>
        <taxon>Brassicaceae</taxon>
        <taxon>Camelineae</taxon>
        <taxon>Arabidopsis</taxon>
    </lineage>
</organism>
<feature type="chain" id="PRO_0000432874" description="Protein SIEVE ELEMENT OCCLUSION B">
    <location>
        <begin position="1"/>
        <end position="740"/>
    </location>
</feature>
<feature type="region of interest" description="Disordered" evidence="1">
    <location>
        <begin position="1"/>
        <end position="27"/>
    </location>
</feature>
<feature type="compositionally biased region" description="Polar residues" evidence="1">
    <location>
        <begin position="1"/>
        <end position="23"/>
    </location>
</feature>
<sequence>MESLIKSQHAQQLAGHKNTTGKTPSMEMIPATGLAMSSDESMMLKLIQQTHSPDAREVQVRGLLSLVEDILDRATLDSEDTNASMLPLPTEDKLMQSSMMSVLDSVSYAIDRVACEIAYKSLTGSDSHEITMSVFEHLSSFQWDGKLVLTLAAFALNYGEFWLLVQFYSKNQLAKSLAMLKLVPVQNRVTLESVSQGLNDLIREMKSVTACVVELSELPDRYITPDVPQLSRILSTIPIAVYWTIRSVIACISQINMITAMGHEMMNTQMDLWETSMLANKLKNIHDHLAETLRLCYRHIEKQRSSESLKVLHSLFDTTHIDNMKILTALVHPKPHITPLQDGLTKRKVHLDVLRRKTVLLLISDLNILQDELSIFEQIYTESRRNLVGVDGKSHMPYEVVWVPVVDPIEDFERSPILQKKFEDLRDPMPWYSVDSPKLIERHVVEFMRGRWHFMNKPILVVIDPQGNEASLNALHMIWIWGTEAFPFTRSREEELWRRETFSLNLIVDGIDSVIFNWIKPDNYIFLYGGDDLDWIRRFTMAAKATAKDSNVNLEMAYVGKRNHSHREQIRRISEVIRSENLSHSWAEPALMWFFWTRLESMLYSKIQLGKADDHDDVMQGIKKILSYDKLGGWALLSKGPEIVMIAHGAIERTMSVYDRTWKTHVPTKGYTKAMSDHHHDEVLRETGKPCGHFDFHITARSGRIPEKMNCFECQRPMEKYMSFSCCHDEKLHEDENYNF</sequence>